<reference key="1">
    <citation type="journal article" date="1998" name="Plant Physiol.">
        <title>Molecular and biochemical characterization of cytosolic phosphoglucomutase in maize: expression during development and in response to oxygen deprivation.</title>
        <authorList>
            <person name="Manjunath S."/>
            <person name="Lee C.-H.K."/>
            <person name="VanWinkle P."/>
            <person name="Bailey-Serres J."/>
        </authorList>
    </citation>
    <scope>NUCLEOTIDE SEQUENCE [MRNA]</scope>
    <scope>FUNCTION</scope>
    <scope>CATALYTIC ACTIVITY</scope>
    <scope>SUBCELLULAR LOCATION</scope>
    <scope>TISSUE SPECIFICITY</scope>
    <scope>DEVELOPMENTAL STAGE</scope>
    <scope>REPRESSION BY HYPOXIA</scope>
    <scope>AUTOPHOSPHORYLATION</scope>
    <source>
        <strain>cv. B73</strain>
    </source>
</reference>
<accession>P93804</accession>
<feature type="chain" id="PRO_0000147801" description="Phosphoglucomutase, cytoplasmic 1">
    <location>
        <begin position="1"/>
        <end position="583"/>
    </location>
</feature>
<feature type="active site" description="Phosphoserine intermediate" evidence="1">
    <location>
        <position position="124"/>
    </location>
</feature>
<feature type="binding site" evidence="1">
    <location>
        <position position="25"/>
    </location>
    <ligand>
        <name>alpha-D-glucose 1,6-bisphosphate</name>
        <dbReference type="ChEBI" id="CHEBI:58392"/>
    </ligand>
</feature>
<feature type="binding site" evidence="1">
    <location>
        <position position="124"/>
    </location>
    <ligand>
        <name>alpha-D-glucose 1,6-bisphosphate</name>
        <dbReference type="ChEBI" id="CHEBI:58392"/>
    </ligand>
</feature>
<feature type="binding site" description="via phosphate group" evidence="1">
    <location>
        <position position="124"/>
    </location>
    <ligand>
        <name>Mg(2+)</name>
        <dbReference type="ChEBI" id="CHEBI:18420"/>
    </ligand>
</feature>
<feature type="binding site" evidence="1">
    <location>
        <position position="300"/>
    </location>
    <ligand>
        <name>Mg(2+)</name>
        <dbReference type="ChEBI" id="CHEBI:18420"/>
    </ligand>
</feature>
<feature type="binding site" evidence="1">
    <location>
        <position position="302"/>
    </location>
    <ligand>
        <name>Mg(2+)</name>
        <dbReference type="ChEBI" id="CHEBI:18420"/>
    </ligand>
</feature>
<feature type="binding site" evidence="1">
    <location>
        <position position="304"/>
    </location>
    <ligand>
        <name>alpha-D-glucose 1,6-bisphosphate</name>
        <dbReference type="ChEBI" id="CHEBI:58392"/>
    </ligand>
</feature>
<feature type="binding site" evidence="1">
    <location>
        <position position="304"/>
    </location>
    <ligand>
        <name>Mg(2+)</name>
        <dbReference type="ChEBI" id="CHEBI:18420"/>
    </ligand>
</feature>
<feature type="binding site" evidence="1">
    <location>
        <position position="305"/>
    </location>
    <ligand>
        <name>alpha-D-glucose 1,6-bisphosphate</name>
        <dbReference type="ChEBI" id="CHEBI:58392"/>
    </ligand>
</feature>
<feature type="binding site" evidence="1">
    <location>
        <position position="368"/>
    </location>
    <ligand>
        <name>alpha-D-glucose 1,6-bisphosphate</name>
        <dbReference type="ChEBI" id="CHEBI:58392"/>
    </ligand>
</feature>
<feature type="binding site" evidence="1">
    <location>
        <position position="387"/>
    </location>
    <ligand>
        <name>alpha-D-glucose 1,6-bisphosphate</name>
        <dbReference type="ChEBI" id="CHEBI:58392"/>
    </ligand>
</feature>
<feature type="binding site" evidence="1">
    <location>
        <position position="389"/>
    </location>
    <ligand>
        <name>alpha-D-glucose 1,6-bisphosphate</name>
        <dbReference type="ChEBI" id="CHEBI:58392"/>
    </ligand>
</feature>
<feature type="binding site" evidence="1">
    <location>
        <position position="400"/>
    </location>
    <ligand>
        <name>alpha-D-glucose 1,6-bisphosphate</name>
        <dbReference type="ChEBI" id="CHEBI:58392"/>
    </ligand>
</feature>
<feature type="modified residue" description="Phosphoserine" evidence="1">
    <location>
        <position position="124"/>
    </location>
</feature>
<name>PGMC1_MAIZE</name>
<keyword id="KW-0119">Carbohydrate metabolism</keyword>
<keyword id="KW-0963">Cytoplasm</keyword>
<keyword id="KW-0313">Glucose metabolism</keyword>
<keyword id="KW-0413">Isomerase</keyword>
<keyword id="KW-0460">Magnesium</keyword>
<keyword id="KW-0479">Metal-binding</keyword>
<keyword id="KW-0597">Phosphoprotein</keyword>
<keyword id="KW-1185">Reference proteome</keyword>
<proteinExistence type="evidence at protein level"/>
<comment type="function">
    <text evidence="2 3 6">Catalyzes the reversible isomerization of alpha-D-glucose 1-phosphate to alpha-D-glucose 6-phosphate (PubMed:9662542). The mechanism proceeds via the intermediate compound alpha-D-glucose 1,6-bisphosphate (Probable). This enzyme participates in both the breakdown and synthesis of glucose (By similarity).</text>
</comment>
<comment type="catalytic activity">
    <reaction evidence="3">
        <text>alpha-D-glucose 1-phosphate = alpha-D-glucose 6-phosphate</text>
        <dbReference type="Rhea" id="RHEA:23536"/>
        <dbReference type="ChEBI" id="CHEBI:58225"/>
        <dbReference type="ChEBI" id="CHEBI:58601"/>
        <dbReference type="EC" id="5.4.2.2"/>
    </reaction>
</comment>
<comment type="catalytic activity">
    <reaction evidence="6">
        <text>O-phospho-L-seryl-[protein] + alpha-D-glucose 1-phosphate = alpha-D-glucose 1,6-bisphosphate + L-seryl-[protein]</text>
        <dbReference type="Rhea" id="RHEA:68748"/>
        <dbReference type="Rhea" id="RHEA-COMP:9863"/>
        <dbReference type="Rhea" id="RHEA-COMP:11604"/>
        <dbReference type="ChEBI" id="CHEBI:29999"/>
        <dbReference type="ChEBI" id="CHEBI:58392"/>
        <dbReference type="ChEBI" id="CHEBI:58601"/>
        <dbReference type="ChEBI" id="CHEBI:83421"/>
    </reaction>
</comment>
<comment type="catalytic activity">
    <reaction evidence="6">
        <text>alpha-D-glucose 1,6-bisphosphate + L-seryl-[protein] = O-phospho-L-seryl-[protein] + alpha-D-glucose 6-phosphate</text>
        <dbReference type="Rhea" id="RHEA:68752"/>
        <dbReference type="Rhea" id="RHEA-COMP:9863"/>
        <dbReference type="Rhea" id="RHEA-COMP:11604"/>
        <dbReference type="ChEBI" id="CHEBI:29999"/>
        <dbReference type="ChEBI" id="CHEBI:58225"/>
        <dbReference type="ChEBI" id="CHEBI:58392"/>
        <dbReference type="ChEBI" id="CHEBI:83421"/>
    </reaction>
</comment>
<comment type="cofactor">
    <cofactor evidence="1">
        <name>Mg(2+)</name>
        <dbReference type="ChEBI" id="CHEBI:18420"/>
    </cofactor>
    <text evidence="1">Binds 1 Mg(2+) ion per subunit.</text>
</comment>
<comment type="subunit">
    <text evidence="1">Monomer.</text>
</comment>
<comment type="subcellular location">
    <subcellularLocation>
        <location evidence="4">Cytoplasm</location>
    </subcellularLocation>
</comment>
<comment type="tissue specificity">
    <text evidence="3">Mostly expressed in roots and coleoptiles, and, to a lower extent, in leaves, pollen and developing seeds.</text>
</comment>
<comment type="developmental stage">
    <text evidence="3">Expressed throughout embryo development, with a slight decrease during endosperm development, and fades out during aleurone development.</text>
</comment>
<comment type="induction">
    <text evidence="3">Repressed in O(2) deprivated (hypoxia/anoxia) conditions.</text>
</comment>
<comment type="PTM">
    <text evidence="3">Autophosphorylated.</text>
</comment>
<comment type="similarity">
    <text evidence="5">Belongs to the phosphohexose mutase family.</text>
</comment>
<organism>
    <name type="scientific">Zea mays</name>
    <name type="common">Maize</name>
    <dbReference type="NCBI Taxonomy" id="4577"/>
    <lineage>
        <taxon>Eukaryota</taxon>
        <taxon>Viridiplantae</taxon>
        <taxon>Streptophyta</taxon>
        <taxon>Embryophyta</taxon>
        <taxon>Tracheophyta</taxon>
        <taxon>Spermatophyta</taxon>
        <taxon>Magnoliopsida</taxon>
        <taxon>Liliopsida</taxon>
        <taxon>Poales</taxon>
        <taxon>Poaceae</taxon>
        <taxon>PACMAD clade</taxon>
        <taxon>Panicoideae</taxon>
        <taxon>Andropogonodae</taxon>
        <taxon>Andropogoneae</taxon>
        <taxon>Tripsacinae</taxon>
        <taxon>Zea</taxon>
    </lineage>
</organism>
<protein>
    <recommendedName>
        <fullName evidence="4">Phosphoglucomutase, cytoplasmic 1</fullName>
        <shortName evidence="4">PGM 1</shortName>
        <ecNumber evidence="3">5.4.2.2</ecNumber>
    </recommendedName>
    <alternativeName>
        <fullName evidence="4">Glucose phosphomutase 1</fullName>
    </alternativeName>
</protein>
<sequence>MGLFTVTKKATTPFDGQKPGTSGLRKKVTVFQQPHYLQNFVQSTFNALPVDQVRGATIVVSGDGRYFSKDAVQIITKMAAANGVRRVWVGQNSLMSTPAVSAVIRERVGADGSKATGAFILTASHNPGGPKEDFGIKYNMGNGGPAPESVTDKIFSNTTTISEYLISEDLPDVDISVVGVTSFSGPEGPFDVDVFDSSVDYIKLMKTIFDFEAIKKLLTSPKFTFCYDALHGVAGAYAKHIFVEELGADESSLLNCVPKEDFGGGHPDPNLTYAKELVERMGLGKSSSNVEPPEFGAAADGDADRNMILGKRFFVTPSDSVAIIAANAVQSIPYFASGLKGVARSMPTSAALDVVAKNLNLKFFEVPTGWKFFGNLMDAGMCSICGEESFGTGSDHIREKDGIWAVLAWLSIIAFKNKDNLGGDKLVTVEDIVRQHWATYGRHYYTRYDYENVDAGAAKELMANLVSMQSSLSDVNKLVKEIRSDVSEVVAADEFEYKDPVDGSVSKHQGIRYLFGDGSRLVFRLSGTGSVGATIRVYIEQYERDSSKTGRDSQDALAPLVDVALKLSKMQEYTGRSAPTVIT</sequence>
<evidence type="ECO:0000250" key="1">
    <source>
        <dbReference type="UniProtKB" id="P00949"/>
    </source>
</evidence>
<evidence type="ECO:0000250" key="2">
    <source>
        <dbReference type="UniProtKB" id="P36871"/>
    </source>
</evidence>
<evidence type="ECO:0000269" key="3">
    <source>
    </source>
</evidence>
<evidence type="ECO:0000303" key="4">
    <source>
    </source>
</evidence>
<evidence type="ECO:0000305" key="5"/>
<evidence type="ECO:0000305" key="6">
    <source>
    </source>
</evidence>
<dbReference type="EC" id="5.4.2.2" evidence="3"/>
<dbReference type="EMBL" id="U89341">
    <property type="protein sequence ID" value="AAC50048.1"/>
    <property type="molecule type" value="mRNA"/>
</dbReference>
<dbReference type="PIR" id="T04326">
    <property type="entry name" value="T04326"/>
</dbReference>
<dbReference type="RefSeq" id="NP_001105703.1">
    <property type="nucleotide sequence ID" value="NM_001112233.1"/>
</dbReference>
<dbReference type="SMR" id="P93804"/>
<dbReference type="FunCoup" id="P93804">
    <property type="interactions" value="3394"/>
</dbReference>
<dbReference type="STRING" id="4577.P93804"/>
<dbReference type="iPTMnet" id="P93804"/>
<dbReference type="PaxDb" id="4577-GRMZM2G109383_P01"/>
<dbReference type="GeneID" id="542721"/>
<dbReference type="KEGG" id="zma:542721"/>
<dbReference type="MaizeGDB" id="12543"/>
<dbReference type="eggNOG" id="KOG0625">
    <property type="taxonomic scope" value="Eukaryota"/>
</dbReference>
<dbReference type="InParanoid" id="P93804"/>
<dbReference type="OrthoDB" id="2291at2759"/>
<dbReference type="BRENDA" id="5.4.2.2">
    <property type="organism ID" value="6752"/>
</dbReference>
<dbReference type="Proteomes" id="UP000007305">
    <property type="component" value="Unplaced"/>
</dbReference>
<dbReference type="ExpressionAtlas" id="P93804">
    <property type="expression patterns" value="baseline and differential"/>
</dbReference>
<dbReference type="GO" id="GO:0005829">
    <property type="term" value="C:cytosol"/>
    <property type="evidence" value="ECO:0000318"/>
    <property type="project" value="GO_Central"/>
</dbReference>
<dbReference type="GO" id="GO:0000287">
    <property type="term" value="F:magnesium ion binding"/>
    <property type="evidence" value="ECO:0007669"/>
    <property type="project" value="InterPro"/>
</dbReference>
<dbReference type="GO" id="GO:0004614">
    <property type="term" value="F:phosphoglucomutase activity"/>
    <property type="evidence" value="ECO:0000314"/>
    <property type="project" value="CACAO"/>
</dbReference>
<dbReference type="GO" id="GO:0005975">
    <property type="term" value="P:carbohydrate metabolic process"/>
    <property type="evidence" value="ECO:0000318"/>
    <property type="project" value="GO_Central"/>
</dbReference>
<dbReference type="GO" id="GO:0006006">
    <property type="term" value="P:glucose metabolic process"/>
    <property type="evidence" value="ECO:0007669"/>
    <property type="project" value="UniProtKB-KW"/>
</dbReference>
<dbReference type="CDD" id="cd03085">
    <property type="entry name" value="PGM1"/>
    <property type="match status" value="1"/>
</dbReference>
<dbReference type="FunFam" id="3.30.310.50:FF:000002">
    <property type="entry name" value="Phosphoglucomutase 5"/>
    <property type="match status" value="1"/>
</dbReference>
<dbReference type="FunFam" id="3.40.120.10:FF:000004">
    <property type="entry name" value="Phosphoglucomutase 5"/>
    <property type="match status" value="1"/>
</dbReference>
<dbReference type="FunFam" id="3.40.120.10:FF:000005">
    <property type="entry name" value="Phosphoglucomutase 5"/>
    <property type="match status" value="1"/>
</dbReference>
<dbReference type="FunFam" id="3.40.120.10:FF:000009">
    <property type="entry name" value="Phosphoglucomutase, cytoplasmic 1"/>
    <property type="match status" value="1"/>
</dbReference>
<dbReference type="Gene3D" id="3.40.120.10">
    <property type="entry name" value="Alpha-D-Glucose-1,6-Bisphosphate, subunit A, domain 3"/>
    <property type="match status" value="3"/>
</dbReference>
<dbReference type="Gene3D" id="3.30.310.50">
    <property type="entry name" value="Alpha-D-phosphohexomutase, C-terminal domain"/>
    <property type="match status" value="1"/>
</dbReference>
<dbReference type="InterPro" id="IPR005844">
    <property type="entry name" value="A-D-PHexomutase_a/b/a-I"/>
</dbReference>
<dbReference type="InterPro" id="IPR016055">
    <property type="entry name" value="A-D-PHexomutase_a/b/a-I/II/III"/>
</dbReference>
<dbReference type="InterPro" id="IPR005845">
    <property type="entry name" value="A-D-PHexomutase_a/b/a-II"/>
</dbReference>
<dbReference type="InterPro" id="IPR005846">
    <property type="entry name" value="A-D-PHexomutase_a/b/a-III"/>
</dbReference>
<dbReference type="InterPro" id="IPR036900">
    <property type="entry name" value="A-D-PHexomutase_C_sf"/>
</dbReference>
<dbReference type="InterPro" id="IPR016066">
    <property type="entry name" value="A-D-PHexomutase_CS"/>
</dbReference>
<dbReference type="InterPro" id="IPR005841">
    <property type="entry name" value="Alpha-D-phosphohexomutase_SF"/>
</dbReference>
<dbReference type="InterPro" id="IPR045244">
    <property type="entry name" value="PGM"/>
</dbReference>
<dbReference type="NCBIfam" id="NF005737">
    <property type="entry name" value="PRK07564.1-1"/>
    <property type="match status" value="1"/>
</dbReference>
<dbReference type="PANTHER" id="PTHR22573:SF2">
    <property type="entry name" value="PHOSPHOGLUCOMUTASE"/>
    <property type="match status" value="1"/>
</dbReference>
<dbReference type="PANTHER" id="PTHR22573">
    <property type="entry name" value="PHOSPHOHEXOMUTASE FAMILY MEMBER"/>
    <property type="match status" value="1"/>
</dbReference>
<dbReference type="Pfam" id="PF24947">
    <property type="entry name" value="PGM1_C_vert_fung"/>
    <property type="match status" value="1"/>
</dbReference>
<dbReference type="Pfam" id="PF02878">
    <property type="entry name" value="PGM_PMM_I"/>
    <property type="match status" value="1"/>
</dbReference>
<dbReference type="Pfam" id="PF02879">
    <property type="entry name" value="PGM_PMM_II"/>
    <property type="match status" value="1"/>
</dbReference>
<dbReference type="Pfam" id="PF02880">
    <property type="entry name" value="PGM_PMM_III"/>
    <property type="match status" value="1"/>
</dbReference>
<dbReference type="PRINTS" id="PR00509">
    <property type="entry name" value="PGMPMM"/>
</dbReference>
<dbReference type="SUPFAM" id="SSF55957">
    <property type="entry name" value="Phosphoglucomutase, C-terminal domain"/>
    <property type="match status" value="1"/>
</dbReference>
<dbReference type="SUPFAM" id="SSF53738">
    <property type="entry name" value="Phosphoglucomutase, first 3 domains"/>
    <property type="match status" value="3"/>
</dbReference>
<dbReference type="PROSITE" id="PS00710">
    <property type="entry name" value="PGM_PMM"/>
    <property type="match status" value="1"/>
</dbReference>